<protein>
    <recommendedName>
        <fullName evidence="1">Small ribosomal subunit protein uS14</fullName>
    </recommendedName>
    <alternativeName>
        <fullName evidence="3">30S ribosomal protein S14</fullName>
    </alternativeName>
</protein>
<reference key="1">
    <citation type="journal article" date="2008" name="J. Bacteriol.">
        <title>Genome of the actinomycete plant pathogen Clavibacter michiganensis subsp. sepedonicus suggests recent niche adaptation.</title>
        <authorList>
            <person name="Bentley S.D."/>
            <person name="Corton C."/>
            <person name="Brown S.E."/>
            <person name="Barron A."/>
            <person name="Clark L."/>
            <person name="Doggett J."/>
            <person name="Harris B."/>
            <person name="Ormond D."/>
            <person name="Quail M.A."/>
            <person name="May G."/>
            <person name="Francis D."/>
            <person name="Knudson D."/>
            <person name="Parkhill J."/>
            <person name="Ishimaru C.A."/>
        </authorList>
    </citation>
    <scope>NUCLEOTIDE SEQUENCE [LARGE SCALE GENOMIC DNA]</scope>
    <source>
        <strain>ATCC 33113 / DSM 20744 / JCM 9667 / LMG 2889 / ICMP 2535 / C-1</strain>
    </source>
</reference>
<sequence length="101" mass="11479">MAKKSKIARNEQRKVIVERYAAKRLELKKALVDPNGTDESREAARAGIQRLPRDASPIRVRNRDGIDGRPRGNLSKFGISRVRFRDMAHRGELPGITKSSW</sequence>
<organism>
    <name type="scientific">Clavibacter sepedonicus</name>
    <name type="common">Clavibacter michiganensis subsp. sepedonicus</name>
    <dbReference type="NCBI Taxonomy" id="31964"/>
    <lineage>
        <taxon>Bacteria</taxon>
        <taxon>Bacillati</taxon>
        <taxon>Actinomycetota</taxon>
        <taxon>Actinomycetes</taxon>
        <taxon>Micrococcales</taxon>
        <taxon>Microbacteriaceae</taxon>
        <taxon>Clavibacter</taxon>
    </lineage>
</organism>
<accession>B0RDK9</accession>
<comment type="function">
    <text evidence="1">Binds 16S rRNA, required for the assembly of 30S particles and may also be responsible for determining the conformation of the 16S rRNA at the A site.</text>
</comment>
<comment type="subunit">
    <text evidence="1">Part of the 30S ribosomal subunit. Contacts proteins S3 and S10.</text>
</comment>
<comment type="similarity">
    <text evidence="1">Belongs to the universal ribosomal protein uS14 family.</text>
</comment>
<feature type="chain" id="PRO_1000128366" description="Small ribosomal subunit protein uS14">
    <location>
        <begin position="1"/>
        <end position="101"/>
    </location>
</feature>
<feature type="region of interest" description="Disordered" evidence="2">
    <location>
        <begin position="36"/>
        <end position="72"/>
    </location>
</feature>
<feature type="compositionally biased region" description="Basic and acidic residues" evidence="2">
    <location>
        <begin position="61"/>
        <end position="70"/>
    </location>
</feature>
<name>RS14_CLASE</name>
<keyword id="KW-0687">Ribonucleoprotein</keyword>
<keyword id="KW-0689">Ribosomal protein</keyword>
<keyword id="KW-0694">RNA-binding</keyword>
<keyword id="KW-0699">rRNA-binding</keyword>
<proteinExistence type="inferred from homology"/>
<evidence type="ECO:0000255" key="1">
    <source>
        <dbReference type="HAMAP-Rule" id="MF_00537"/>
    </source>
</evidence>
<evidence type="ECO:0000256" key="2">
    <source>
        <dbReference type="SAM" id="MobiDB-lite"/>
    </source>
</evidence>
<evidence type="ECO:0000305" key="3"/>
<dbReference type="EMBL" id="AM849034">
    <property type="protein sequence ID" value="CAQ03138.1"/>
    <property type="molecule type" value="Genomic_DNA"/>
</dbReference>
<dbReference type="RefSeq" id="WP_012039623.1">
    <property type="nucleotide sequence ID" value="NZ_MZMN01000003.1"/>
</dbReference>
<dbReference type="SMR" id="B0RDK9"/>
<dbReference type="STRING" id="31964.CMS3070"/>
<dbReference type="GeneID" id="92948953"/>
<dbReference type="KEGG" id="cms:CMS3070"/>
<dbReference type="eggNOG" id="COG0199">
    <property type="taxonomic scope" value="Bacteria"/>
</dbReference>
<dbReference type="HOGENOM" id="CLU_139869_0_1_11"/>
<dbReference type="OrthoDB" id="9810484at2"/>
<dbReference type="Proteomes" id="UP000001318">
    <property type="component" value="Chromosome"/>
</dbReference>
<dbReference type="GO" id="GO:0015935">
    <property type="term" value="C:small ribosomal subunit"/>
    <property type="evidence" value="ECO:0007669"/>
    <property type="project" value="TreeGrafter"/>
</dbReference>
<dbReference type="GO" id="GO:0019843">
    <property type="term" value="F:rRNA binding"/>
    <property type="evidence" value="ECO:0007669"/>
    <property type="project" value="UniProtKB-UniRule"/>
</dbReference>
<dbReference type="GO" id="GO:0003735">
    <property type="term" value="F:structural constituent of ribosome"/>
    <property type="evidence" value="ECO:0007669"/>
    <property type="project" value="InterPro"/>
</dbReference>
<dbReference type="GO" id="GO:0006412">
    <property type="term" value="P:translation"/>
    <property type="evidence" value="ECO:0007669"/>
    <property type="project" value="UniProtKB-UniRule"/>
</dbReference>
<dbReference type="FunFam" id="1.10.287.1480:FF:000001">
    <property type="entry name" value="30S ribosomal protein S14"/>
    <property type="match status" value="1"/>
</dbReference>
<dbReference type="Gene3D" id="1.10.287.1480">
    <property type="match status" value="1"/>
</dbReference>
<dbReference type="HAMAP" id="MF_00537">
    <property type="entry name" value="Ribosomal_uS14_1"/>
    <property type="match status" value="1"/>
</dbReference>
<dbReference type="InterPro" id="IPR001209">
    <property type="entry name" value="Ribosomal_uS14"/>
</dbReference>
<dbReference type="InterPro" id="IPR023036">
    <property type="entry name" value="Ribosomal_uS14_bac/plastid"/>
</dbReference>
<dbReference type="NCBIfam" id="NF006477">
    <property type="entry name" value="PRK08881.1"/>
    <property type="match status" value="1"/>
</dbReference>
<dbReference type="PANTHER" id="PTHR19836">
    <property type="entry name" value="30S RIBOSOMAL PROTEIN S14"/>
    <property type="match status" value="1"/>
</dbReference>
<dbReference type="PANTHER" id="PTHR19836:SF23">
    <property type="entry name" value="SMALL RIBOSOMAL SUBUNIT PROTEIN US14A"/>
    <property type="match status" value="1"/>
</dbReference>
<dbReference type="Pfam" id="PF00253">
    <property type="entry name" value="Ribosomal_S14"/>
    <property type="match status" value="1"/>
</dbReference>
<dbReference type="SUPFAM" id="SSF57716">
    <property type="entry name" value="Glucocorticoid receptor-like (DNA-binding domain)"/>
    <property type="match status" value="1"/>
</dbReference>
<gene>
    <name evidence="1" type="primary">rpsN</name>
    <name type="ordered locus">CMS3070</name>
</gene>